<name>DPOL_HBVGB</name>
<keyword id="KW-0235">DNA replication</keyword>
<keyword id="KW-0238">DNA-binding</keyword>
<keyword id="KW-0239">DNA-directed DNA polymerase</keyword>
<keyword id="KW-0255">Endonuclease</keyword>
<keyword id="KW-0945">Host-virus interaction</keyword>
<keyword id="KW-0378">Hydrolase</keyword>
<keyword id="KW-1090">Inhibition of host innate immune response by virus</keyword>
<keyword id="KW-1113">Inhibition of host RLR pathway by virus</keyword>
<keyword id="KW-0460">Magnesium</keyword>
<keyword id="KW-0479">Metal-binding</keyword>
<keyword id="KW-0511">Multifunctional enzyme</keyword>
<keyword id="KW-0540">Nuclease</keyword>
<keyword id="KW-0548">Nucleotidyltransferase</keyword>
<keyword id="KW-0695">RNA-directed DNA polymerase</keyword>
<keyword id="KW-0808">Transferase</keyword>
<keyword id="KW-0899">Viral immunoevasion</keyword>
<reference key="1">
    <citation type="journal article" date="1996" name="Virology">
        <title>Complete sequencing of a gibbon hepatitis B virus genome reveals a unique genotype distantly related to the chimpanzee hepatitis B virus.</title>
        <authorList>
            <person name="Norder H."/>
            <person name="Ebert J.W."/>
            <person name="Fields H.A."/>
            <person name="Mushahwar I.K."/>
            <person name="Magnius L.O."/>
        </authorList>
    </citation>
    <scope>NUCLEOTIDE SEQUENCE [GENOMIC DNA]</scope>
</reference>
<reference key="2">
    <citation type="journal article" date="2007" name="World J. Gastroenterol.">
        <title>Hepatitis B virus replication.</title>
        <authorList>
            <person name="Beck J."/>
            <person name="Nassal M."/>
        </authorList>
    </citation>
    <scope>REVIEW</scope>
</reference>
<evidence type="ECO:0000255" key="1">
    <source>
        <dbReference type="HAMAP-Rule" id="MF_04073"/>
    </source>
</evidence>
<evidence type="ECO:0000256" key="2">
    <source>
        <dbReference type="SAM" id="MobiDB-lite"/>
    </source>
</evidence>
<organism>
    <name type="scientific">Gibbon hepatitis B virus subtype ayw3q (isolate Hope)</name>
    <name type="common">HBVgbn</name>
    <dbReference type="NCBI Taxonomy" id="489544"/>
    <lineage>
        <taxon>Viruses</taxon>
        <taxon>Riboviria</taxon>
        <taxon>Pararnavirae</taxon>
        <taxon>Artverviricota</taxon>
        <taxon>Revtraviricetes</taxon>
        <taxon>Blubervirales</taxon>
        <taxon>Hepadnaviridae</taxon>
        <taxon>Orthohepadnavirus</taxon>
        <taxon>Hepatitis B virus</taxon>
    </lineage>
</organism>
<protein>
    <recommendedName>
        <fullName evidence="1">Protein P</fullName>
    </recommendedName>
    <domain>
        <recommendedName>
            <fullName evidence="1">DNA-directed DNA polymerase</fullName>
            <ecNumber evidence="1">2.7.7.7</ecNumber>
        </recommendedName>
    </domain>
    <domain>
        <recommendedName>
            <fullName evidence="1">RNA-directed DNA polymerase</fullName>
            <ecNumber evidence="1">2.7.7.49</ecNumber>
        </recommendedName>
    </domain>
    <domain>
        <recommendedName>
            <fullName evidence="1">Ribonuclease H</fullName>
            <ecNumber evidence="1">3.1.26.4</ecNumber>
        </recommendedName>
    </domain>
</protein>
<gene>
    <name evidence="1" type="primary">P</name>
</gene>
<accession>P87744</accession>
<proteinExistence type="inferred from homology"/>
<organismHost>
    <name type="scientific">Hylobatidae</name>
    <name type="common">gibbons</name>
    <dbReference type="NCBI Taxonomy" id="9577"/>
</organismHost>
<feature type="chain" id="PRO_0000323283" description="Protein P">
    <location>
        <begin position="1"/>
        <end position="832"/>
    </location>
</feature>
<feature type="domain" description="Reverse transcriptase" evidence="1">
    <location>
        <begin position="346"/>
        <end position="589"/>
    </location>
</feature>
<feature type="region of interest" description="Terminal protein domain (TP)" evidence="1">
    <location>
        <begin position="1"/>
        <end position="177"/>
    </location>
</feature>
<feature type="region of interest" description="Spacer" evidence="1">
    <location>
        <begin position="178"/>
        <end position="335"/>
    </location>
</feature>
<feature type="region of interest" description="Disordered" evidence="2">
    <location>
        <begin position="208"/>
        <end position="241"/>
    </location>
</feature>
<feature type="region of interest" description="Polymerase/reverse transcriptase domain (RT)" evidence="1">
    <location>
        <begin position="336"/>
        <end position="679"/>
    </location>
</feature>
<feature type="compositionally biased region" description="Low complexity" evidence="2">
    <location>
        <begin position="208"/>
        <end position="224"/>
    </location>
</feature>
<feature type="binding site" evidence="1">
    <location>
        <position position="418"/>
    </location>
    <ligand>
        <name>Mg(2+)</name>
        <dbReference type="ChEBI" id="CHEBI:18420"/>
        <note>catalytic</note>
    </ligand>
</feature>
<feature type="binding site" evidence="1">
    <location>
        <position position="540"/>
    </location>
    <ligand>
        <name>Mg(2+)</name>
        <dbReference type="ChEBI" id="CHEBI:18420"/>
        <note>catalytic</note>
    </ligand>
</feature>
<feature type="binding site" evidence="1">
    <location>
        <position position="541"/>
    </location>
    <ligand>
        <name>Mg(2+)</name>
        <dbReference type="ChEBI" id="CHEBI:18420"/>
        <note>catalytic</note>
    </ligand>
</feature>
<feature type="site" description="Priming of reverse-transcription by covalently linking the first nucleotide of the (-)DNA" evidence="1">
    <location>
        <position position="63"/>
    </location>
</feature>
<sequence length="832" mass="93539">MPLSCPHFRKLLLLDEEAGPLEEELPRLADEGLNRRVAEDLNLQLPNVSIPWTHKVGNFTGLYSSTVPVFNPKWQTPSFPDIHLHQDIINKCEQFVGPLTVNEKRRLKLIIAARFYPNAPKYLPLDKGIKPYYPEHVVNHYFQTRHYLHILWKAGILYKRETTRSASFCGSPYSWEQELQHGAEPVCQQSLGILPRASVGSPVQSQLKQSRLGLQSQQRQLARSHQGRSGSIRARVHSTTRRSFRVELSGSGSNHNIASTSSSCRHQSAVRETAYSHLSTVERHSSSGHEVELYSIPPNSARSQSTGPILSCWWLQFRNSEPCSDYCLSHLVNLLEDWGPCTEHGEHHIRIPRTPARVTGGVFLVDKNPHNTTESRLVVDFSQFSRGSTRVSWPKFAVPNLQSLTNLLSSNLSWLSLDVSAAFYHLPLHPAAMPHLLVGSSGLSRYVARLSSTSRIIDHQHGTMQNLHDHCSRNLFVSLMLLYKTFGRKLHLYSHPIVLGFRKIPMGVGLSPFLLAQFTSSICSVVRRAFPHCLAFSYMDDLVLGAKSVQHLESIYTAVTNFLLSLGIHLNPNKTKRWGYSLNFMGYIIGSWGSLPQDHIVQKIKQCFRKLPVNRPIDWKVCQRIVGLLGFAAPFTQCGYPALMPLYACIQAKQAFTFSPTYKAFLRTQYLTLYPVARQRPGLCQVFADATPTGWGLAIGHQRMRGTFVAPLPIHTAELLAACFARSRSGANIIGTDNSVVLSPKYTSFPWLLGCAANWILRRTSFVYVPSALNPADDPSRGRLGLYRPLLRPWFRPTTGRTSLYAVSPSVPSHLPVRVHFASPLHVAWRPP</sequence>
<comment type="function">
    <text evidence="1">Multifunctional enzyme that converts the viral RNA genome into dsDNA in viral cytoplasmic capsids. This enzyme displays a DNA polymerase activity that can copy either DNA or RNA templates, and a ribonuclease H (RNase H) activity that cleaves the RNA strand of RNA-DNA heteroduplexes in a partially processive 3'- to 5'-endonucleasic mode. Neo-synthesized pregenomic RNA (pgRNA) are encapsidated together with the P protein, and reverse-transcribed inside the nucleocapsid. Initiation of reverse-transcription occurs first by binding the epsilon loop on the pgRNA genome, and is initiated by protein priming, thereby the 5'-end of (-)DNA is covalently linked to P protein. Partial (+)DNA is synthesized from the (-)DNA template and generates the relaxed circular DNA (RC-DNA) genome. After budding and infection, the RC-DNA migrates in the nucleus, and is converted into a plasmid-like covalently closed circular DNA (cccDNA). The activity of P protein does not seem to be necessary for cccDNA generation, and is presumably released from (+)DNA by host nuclear DNA repair machinery.</text>
</comment>
<comment type="catalytic activity">
    <reaction evidence="1">
        <text>DNA(n) + a 2'-deoxyribonucleoside 5'-triphosphate = DNA(n+1) + diphosphate</text>
        <dbReference type="Rhea" id="RHEA:22508"/>
        <dbReference type="Rhea" id="RHEA-COMP:17339"/>
        <dbReference type="Rhea" id="RHEA-COMP:17340"/>
        <dbReference type="ChEBI" id="CHEBI:33019"/>
        <dbReference type="ChEBI" id="CHEBI:61560"/>
        <dbReference type="ChEBI" id="CHEBI:173112"/>
        <dbReference type="EC" id="2.7.7.7"/>
    </reaction>
</comment>
<comment type="catalytic activity">
    <reaction evidence="1">
        <text>DNA(n) + a 2'-deoxyribonucleoside 5'-triphosphate = DNA(n+1) + diphosphate</text>
        <dbReference type="Rhea" id="RHEA:22508"/>
        <dbReference type="Rhea" id="RHEA-COMP:17339"/>
        <dbReference type="Rhea" id="RHEA-COMP:17340"/>
        <dbReference type="ChEBI" id="CHEBI:33019"/>
        <dbReference type="ChEBI" id="CHEBI:61560"/>
        <dbReference type="ChEBI" id="CHEBI:173112"/>
        <dbReference type="EC" id="2.7.7.49"/>
    </reaction>
</comment>
<comment type="catalytic activity">
    <reaction evidence="1">
        <text>Endonucleolytic cleavage to 5'-phosphomonoester.</text>
        <dbReference type="EC" id="3.1.26.4"/>
    </reaction>
</comment>
<comment type="activity regulation">
    <text evidence="1">Activated by host HSP70 and HSP40 in vitro to be able to bind the epsilon loop of the pgRNA. Because deletion of the RNase H region renders the protein partly chaperone-independent, the chaperones may be needed indirectly to relieve occlusion of the RNA-binding site by this domain. Inhibited by several reverse-transcriptase inhibitors: Lamivudine, Adefovir and Entecavir.</text>
</comment>
<comment type="domain">
    <text evidence="1">Terminal protein domain (TP) is hepadnavirus-specific. Spacer domain is highly variable and separates the TP and RT domains. Polymerase/reverse-transcriptase domain (RT) and ribonuclease H domain (RH) are similar to retrovirus reverse transcriptase/RNase H.</text>
</comment>
<comment type="domain">
    <text evidence="1">The polymerase/reverse transcriptase (RT) and ribonuclease H (RH) domains are structured in five subdomains: finger, palm, thumb, connection and RNase H. Within the palm subdomain, the 'primer grip' region is thought to be involved in the positioning of the primer terminus for accommodating the incoming nucleotide. The RH domain stabilizes the association of RT with primer-template.</text>
</comment>
<comment type="miscellaneous">
    <text evidence="1">Hepadnaviral virions contain probably just one P protein molecule per particle.</text>
</comment>
<comment type="similarity">
    <text evidence="1">Belongs to the hepadnaviridae P protein family.</text>
</comment>
<dbReference type="EC" id="2.7.7.7" evidence="1"/>
<dbReference type="EC" id="2.7.7.49" evidence="1"/>
<dbReference type="EC" id="3.1.26.4" evidence="1"/>
<dbReference type="EMBL" id="U46935">
    <property type="protein sequence ID" value="AAB41951.1"/>
    <property type="molecule type" value="Genomic_DNA"/>
</dbReference>
<dbReference type="PIR" id="S67505">
    <property type="entry name" value="S67505"/>
</dbReference>
<dbReference type="Proteomes" id="UP000007408">
    <property type="component" value="Genome"/>
</dbReference>
<dbReference type="GO" id="GO:0003677">
    <property type="term" value="F:DNA binding"/>
    <property type="evidence" value="ECO:0007669"/>
    <property type="project" value="UniProtKB-UniRule"/>
</dbReference>
<dbReference type="GO" id="GO:0003887">
    <property type="term" value="F:DNA-directed DNA polymerase activity"/>
    <property type="evidence" value="ECO:0007669"/>
    <property type="project" value="UniProtKB-UniRule"/>
</dbReference>
<dbReference type="GO" id="GO:0046872">
    <property type="term" value="F:metal ion binding"/>
    <property type="evidence" value="ECO:0007669"/>
    <property type="project" value="UniProtKB-UniRule"/>
</dbReference>
<dbReference type="GO" id="GO:0003964">
    <property type="term" value="F:RNA-directed DNA polymerase activity"/>
    <property type="evidence" value="ECO:0007669"/>
    <property type="project" value="UniProtKB-UniRule"/>
</dbReference>
<dbReference type="GO" id="GO:0004523">
    <property type="term" value="F:RNA-DNA hybrid ribonuclease activity"/>
    <property type="evidence" value="ECO:0007669"/>
    <property type="project" value="UniProtKB-UniRule"/>
</dbReference>
<dbReference type="GO" id="GO:0006260">
    <property type="term" value="P:DNA replication"/>
    <property type="evidence" value="ECO:0007669"/>
    <property type="project" value="UniProtKB-UniRule"/>
</dbReference>
<dbReference type="GO" id="GO:0052170">
    <property type="term" value="P:symbiont-mediated suppression of host innate immune response"/>
    <property type="evidence" value="ECO:0007669"/>
    <property type="project" value="UniProtKB-UniRule"/>
</dbReference>
<dbReference type="FunFam" id="3.30.70.270:FF:000009">
    <property type="entry name" value="Protein P"/>
    <property type="match status" value="1"/>
</dbReference>
<dbReference type="Gene3D" id="3.30.70.270">
    <property type="match status" value="1"/>
</dbReference>
<dbReference type="HAMAP" id="MF_04073">
    <property type="entry name" value="HBV_DPOL"/>
    <property type="match status" value="1"/>
</dbReference>
<dbReference type="InterPro" id="IPR043502">
    <property type="entry name" value="DNA/RNA_pol_sf"/>
</dbReference>
<dbReference type="InterPro" id="IPR001462">
    <property type="entry name" value="DNApol_viral_C"/>
</dbReference>
<dbReference type="InterPro" id="IPR000201">
    <property type="entry name" value="DNApol_viral_N"/>
</dbReference>
<dbReference type="InterPro" id="IPR037531">
    <property type="entry name" value="HBV_DPOL"/>
</dbReference>
<dbReference type="InterPro" id="IPR043128">
    <property type="entry name" value="Rev_trsase/Diguanyl_cyclase"/>
</dbReference>
<dbReference type="InterPro" id="IPR000477">
    <property type="entry name" value="RT_dom"/>
</dbReference>
<dbReference type="InterPro" id="IPR051320">
    <property type="entry name" value="Viral_Replic_Matur_Polypro"/>
</dbReference>
<dbReference type="PANTHER" id="PTHR33064:SF29">
    <property type="entry name" value="PEPTIDASE A2 DOMAIN-CONTAINING PROTEIN-RELATED"/>
    <property type="match status" value="1"/>
</dbReference>
<dbReference type="PANTHER" id="PTHR33064">
    <property type="entry name" value="POL PROTEIN"/>
    <property type="match status" value="1"/>
</dbReference>
<dbReference type="Pfam" id="PF00336">
    <property type="entry name" value="DNA_pol_viral_C"/>
    <property type="match status" value="1"/>
</dbReference>
<dbReference type="Pfam" id="PF00242">
    <property type="entry name" value="DNA_pol_viral_N"/>
    <property type="match status" value="1"/>
</dbReference>
<dbReference type="Pfam" id="PF00078">
    <property type="entry name" value="RVT_1"/>
    <property type="match status" value="1"/>
</dbReference>
<dbReference type="SUPFAM" id="SSF56672">
    <property type="entry name" value="DNA/RNA polymerases"/>
    <property type="match status" value="1"/>
</dbReference>
<dbReference type="PROSITE" id="PS50878">
    <property type="entry name" value="RT_POL"/>
    <property type="match status" value="1"/>
</dbReference>